<keyword id="KW-0489">Methyltransferase</keyword>
<keyword id="KW-0539">Nucleus</keyword>
<keyword id="KW-1185">Reference proteome</keyword>
<keyword id="KW-0694">RNA-binding</keyword>
<keyword id="KW-0949">S-adenosyl-L-methionine</keyword>
<keyword id="KW-0808">Transferase</keyword>
<keyword id="KW-0819">tRNA processing</keyword>
<keyword id="KW-0820">tRNA-binding</keyword>
<gene>
    <name type="ORF">GI21651</name>
</gene>
<organism>
    <name type="scientific">Drosophila mojavensis</name>
    <name type="common">Fruit fly</name>
    <dbReference type="NCBI Taxonomy" id="7230"/>
    <lineage>
        <taxon>Eukaryota</taxon>
        <taxon>Metazoa</taxon>
        <taxon>Ecdysozoa</taxon>
        <taxon>Arthropoda</taxon>
        <taxon>Hexapoda</taxon>
        <taxon>Insecta</taxon>
        <taxon>Pterygota</taxon>
        <taxon>Neoptera</taxon>
        <taxon>Endopterygota</taxon>
        <taxon>Diptera</taxon>
        <taxon>Brachycera</taxon>
        <taxon>Muscomorpha</taxon>
        <taxon>Ephydroidea</taxon>
        <taxon>Drosophilidae</taxon>
        <taxon>Drosophila</taxon>
    </lineage>
</organism>
<protein>
    <recommendedName>
        <fullName evidence="1">tRNA (guanine-N(7)-)-methyltransferase</fullName>
        <ecNumber evidence="1">2.1.1.33</ecNumber>
    </recommendedName>
    <alternativeName>
        <fullName evidence="1">tRNA (guanine(46)-N(7))-methyltransferase</fullName>
    </alternativeName>
    <alternativeName>
        <fullName evidence="1">tRNA(m7G46)-methyltransferase</fullName>
    </alternativeName>
</protein>
<sequence length="248" mass="28533">MVANSKESETLTGASAVTGLPQKRFYRQRAHSNPIADHSFNYPARPEDVDWRSLYPSMGDDQQVQFADIGCGYGGFLVTLGEMFPEKLAIGMEIRVKVSDYVIDRIAALRLKNANEATTYQNIACIRTNAMKYLPNYFQKSQLEKMFFLYPDPHFKRAKHKWRIINQALLSEYAYVLRKGGLVYTMTDVEDLHTWIVSHMTQHPLFERLSDEEANADPITPKLYQSSEEGAKVVRNKGEHFLAIFRRI</sequence>
<name>TRMB_DROMO</name>
<feature type="chain" id="PRO_0000370571" description="tRNA (guanine-N(7)-)-methyltransferase">
    <location>
        <begin position="1"/>
        <end position="248"/>
    </location>
</feature>
<feature type="active site" evidence="1">
    <location>
        <position position="152"/>
    </location>
</feature>
<feature type="binding site" evidence="1">
    <location>
        <position position="70"/>
    </location>
    <ligand>
        <name>S-adenosyl-L-methionine</name>
        <dbReference type="ChEBI" id="CHEBI:59789"/>
    </ligand>
</feature>
<feature type="binding site" evidence="1">
    <location>
        <begin position="93"/>
        <end position="94"/>
    </location>
    <ligand>
        <name>S-adenosyl-L-methionine</name>
        <dbReference type="ChEBI" id="CHEBI:59789"/>
    </ligand>
</feature>
<feature type="binding site" evidence="1">
    <location>
        <begin position="129"/>
        <end position="130"/>
    </location>
    <ligand>
        <name>S-adenosyl-L-methionine</name>
        <dbReference type="ChEBI" id="CHEBI:59789"/>
    </ligand>
</feature>
<feature type="binding site" evidence="1">
    <location>
        <position position="149"/>
    </location>
    <ligand>
        <name>S-adenosyl-L-methionine</name>
        <dbReference type="ChEBI" id="CHEBI:59789"/>
    </ligand>
</feature>
<feature type="binding site" evidence="1">
    <location>
        <begin position="227"/>
        <end position="229"/>
    </location>
    <ligand>
        <name>S-adenosyl-L-methionine</name>
        <dbReference type="ChEBI" id="CHEBI:59789"/>
    </ligand>
</feature>
<comment type="function">
    <text evidence="1">Catalyzes the formation of N(7)-methylguanine at position 46 (m7G46) in tRNA.</text>
</comment>
<comment type="catalytic activity">
    <reaction evidence="1">
        <text>guanosine(46) in tRNA + S-adenosyl-L-methionine = N(7)-methylguanosine(46) in tRNA + S-adenosyl-L-homocysteine</text>
        <dbReference type="Rhea" id="RHEA:42708"/>
        <dbReference type="Rhea" id="RHEA-COMP:10188"/>
        <dbReference type="Rhea" id="RHEA-COMP:10189"/>
        <dbReference type="ChEBI" id="CHEBI:57856"/>
        <dbReference type="ChEBI" id="CHEBI:59789"/>
        <dbReference type="ChEBI" id="CHEBI:74269"/>
        <dbReference type="ChEBI" id="CHEBI:74480"/>
        <dbReference type="EC" id="2.1.1.33"/>
    </reaction>
</comment>
<comment type="pathway">
    <text evidence="1">tRNA modification; N(7)-methylguanine-tRNA biosynthesis.</text>
</comment>
<comment type="subcellular location">
    <subcellularLocation>
        <location evidence="1">Nucleus</location>
    </subcellularLocation>
</comment>
<comment type="similarity">
    <text evidence="1">Belongs to the class I-like SAM-binding methyltransferase superfamily. TrmB family.</text>
</comment>
<dbReference type="EC" id="2.1.1.33" evidence="1"/>
<dbReference type="EMBL" id="CH933811">
    <property type="protein sequence ID" value="EDW06288.1"/>
    <property type="molecule type" value="Genomic_DNA"/>
</dbReference>
<dbReference type="SMR" id="B4L529"/>
<dbReference type="FunCoup" id="B4L529">
    <property type="interactions" value="999"/>
</dbReference>
<dbReference type="EnsemblMetazoa" id="FBtr0172376">
    <property type="protein sequence ID" value="FBpp0170868"/>
    <property type="gene ID" value="FBgn0144381"/>
</dbReference>
<dbReference type="EnsemblMetazoa" id="XM_002010597.4">
    <property type="protein sequence ID" value="XP_002010633.1"/>
    <property type="gene ID" value="LOC6584993"/>
</dbReference>
<dbReference type="GeneID" id="6584993"/>
<dbReference type="KEGG" id="dmo:Dmoj_GI21651"/>
<dbReference type="eggNOG" id="KOG3115">
    <property type="taxonomic scope" value="Eukaryota"/>
</dbReference>
<dbReference type="HOGENOM" id="CLU_050910_3_0_1"/>
<dbReference type="InParanoid" id="B4L529"/>
<dbReference type="OMA" id="LPNYFAK"/>
<dbReference type="OrthoDB" id="47276at2759"/>
<dbReference type="PhylomeDB" id="B4L529"/>
<dbReference type="UniPathway" id="UPA00989"/>
<dbReference type="Proteomes" id="UP000009192">
    <property type="component" value="Unassembled WGS sequence"/>
</dbReference>
<dbReference type="GO" id="GO:0005634">
    <property type="term" value="C:nucleus"/>
    <property type="evidence" value="ECO:0007669"/>
    <property type="project" value="UniProtKB-SubCell"/>
</dbReference>
<dbReference type="GO" id="GO:0043527">
    <property type="term" value="C:tRNA methyltransferase complex"/>
    <property type="evidence" value="ECO:0007669"/>
    <property type="project" value="TreeGrafter"/>
</dbReference>
<dbReference type="GO" id="GO:0008176">
    <property type="term" value="F:tRNA (guanine(46)-N7)-methyltransferase activity"/>
    <property type="evidence" value="ECO:0007669"/>
    <property type="project" value="UniProtKB-UniRule"/>
</dbReference>
<dbReference type="GO" id="GO:0000049">
    <property type="term" value="F:tRNA binding"/>
    <property type="evidence" value="ECO:0007669"/>
    <property type="project" value="UniProtKB-UniRule"/>
</dbReference>
<dbReference type="FunFam" id="3.40.50.150:FF:000060">
    <property type="entry name" value="tRNA (guanine-N(7)-)-methyltransferase"/>
    <property type="match status" value="1"/>
</dbReference>
<dbReference type="Gene3D" id="3.40.50.150">
    <property type="entry name" value="Vaccinia Virus protein VP39"/>
    <property type="match status" value="1"/>
</dbReference>
<dbReference type="HAMAP" id="MF_03055">
    <property type="entry name" value="tRNA_methyltr_TrmB_euk"/>
    <property type="match status" value="1"/>
</dbReference>
<dbReference type="InterPro" id="IPR029063">
    <property type="entry name" value="SAM-dependent_MTases_sf"/>
</dbReference>
<dbReference type="InterPro" id="IPR025763">
    <property type="entry name" value="Trm8_euk"/>
</dbReference>
<dbReference type="InterPro" id="IPR003358">
    <property type="entry name" value="tRNA_(Gua-N-7)_MeTrfase_Trmb"/>
</dbReference>
<dbReference type="NCBIfam" id="TIGR00091">
    <property type="entry name" value="tRNA (guanosine(46)-N7)-methyltransferase TrmB"/>
    <property type="match status" value="1"/>
</dbReference>
<dbReference type="PANTHER" id="PTHR23417">
    <property type="entry name" value="3-DEOXY-D-MANNO-OCTULOSONIC-ACID TRANSFERASE/TRNA GUANINE-N 7 - -METHYLTRANSFERASE"/>
    <property type="match status" value="1"/>
</dbReference>
<dbReference type="PANTHER" id="PTHR23417:SF16">
    <property type="entry name" value="TRNA (GUANINE-N(7)-)-METHYLTRANSFERASE"/>
    <property type="match status" value="1"/>
</dbReference>
<dbReference type="Pfam" id="PF02390">
    <property type="entry name" value="Methyltransf_4"/>
    <property type="match status" value="1"/>
</dbReference>
<dbReference type="SUPFAM" id="SSF53335">
    <property type="entry name" value="S-adenosyl-L-methionine-dependent methyltransferases"/>
    <property type="match status" value="1"/>
</dbReference>
<dbReference type="PROSITE" id="PS51625">
    <property type="entry name" value="SAM_MT_TRMB"/>
    <property type="match status" value="1"/>
</dbReference>
<proteinExistence type="inferred from homology"/>
<evidence type="ECO:0000255" key="1">
    <source>
        <dbReference type="HAMAP-Rule" id="MF_03055"/>
    </source>
</evidence>
<accession>B4L529</accession>
<reference key="1">
    <citation type="journal article" date="2007" name="Nature">
        <title>Evolution of genes and genomes on the Drosophila phylogeny.</title>
        <authorList>
            <consortium name="Drosophila 12 genomes consortium"/>
        </authorList>
    </citation>
    <scope>NUCLEOTIDE SEQUENCE [LARGE SCALE GENOMIC DNA]</scope>
    <source>
        <strain>Tucson 15081-1352.22</strain>
    </source>
</reference>